<gene>
    <name evidence="1" type="primary">ilvC</name>
    <name type="ordered locus">mll1405</name>
</gene>
<organism>
    <name type="scientific">Mesorhizobium japonicum (strain LMG 29417 / CECT 9101 / MAFF 303099)</name>
    <name type="common">Mesorhizobium loti (strain MAFF 303099)</name>
    <dbReference type="NCBI Taxonomy" id="266835"/>
    <lineage>
        <taxon>Bacteria</taxon>
        <taxon>Pseudomonadati</taxon>
        <taxon>Pseudomonadota</taxon>
        <taxon>Alphaproteobacteria</taxon>
        <taxon>Hyphomicrobiales</taxon>
        <taxon>Phyllobacteriaceae</taxon>
        <taxon>Mesorhizobium</taxon>
    </lineage>
</organism>
<protein>
    <recommendedName>
        <fullName evidence="1">Ketol-acid reductoisomerase (NADP(+))</fullName>
        <shortName evidence="1">KARI</shortName>
        <ecNumber evidence="1">1.1.1.86</ecNumber>
    </recommendedName>
    <alternativeName>
        <fullName evidence="1">Acetohydroxy-acid isomeroreductase</fullName>
        <shortName evidence="1">AHIR</shortName>
    </alternativeName>
    <alternativeName>
        <fullName evidence="1">Alpha-keto-beta-hydroxylacyl reductoisomerase</fullName>
    </alternativeName>
    <alternativeName>
        <fullName evidence="1">Ketol-acid reductoisomerase type 1</fullName>
    </alternativeName>
    <alternativeName>
        <fullName evidence="1">Ketol-acid reductoisomerase type I</fullName>
    </alternativeName>
</protein>
<proteinExistence type="inferred from homology"/>
<evidence type="ECO:0000255" key="1">
    <source>
        <dbReference type="HAMAP-Rule" id="MF_00435"/>
    </source>
</evidence>
<evidence type="ECO:0000255" key="2">
    <source>
        <dbReference type="PROSITE-ProRule" id="PRU01197"/>
    </source>
</evidence>
<evidence type="ECO:0000255" key="3">
    <source>
        <dbReference type="PROSITE-ProRule" id="PRU01198"/>
    </source>
</evidence>
<accession>Q98KM7</accession>
<reference key="1">
    <citation type="journal article" date="2000" name="DNA Res.">
        <title>Complete genome structure of the nitrogen-fixing symbiotic bacterium Mesorhizobium loti.</title>
        <authorList>
            <person name="Kaneko T."/>
            <person name="Nakamura Y."/>
            <person name="Sato S."/>
            <person name="Asamizu E."/>
            <person name="Kato T."/>
            <person name="Sasamoto S."/>
            <person name="Watanabe A."/>
            <person name="Idesawa K."/>
            <person name="Ishikawa A."/>
            <person name="Kawashima K."/>
            <person name="Kimura T."/>
            <person name="Kishida Y."/>
            <person name="Kiyokawa C."/>
            <person name="Kohara M."/>
            <person name="Matsumoto M."/>
            <person name="Matsuno A."/>
            <person name="Mochizuki Y."/>
            <person name="Nakayama S."/>
            <person name="Nakazaki N."/>
            <person name="Shimpo S."/>
            <person name="Sugimoto M."/>
            <person name="Takeuchi C."/>
            <person name="Yamada M."/>
            <person name="Tabata S."/>
        </authorList>
    </citation>
    <scope>NUCLEOTIDE SEQUENCE [LARGE SCALE GENOMIC DNA]</scope>
    <source>
        <strain>LMG 29417 / CECT 9101 / MAFF 303099</strain>
    </source>
</reference>
<feature type="chain" id="PRO_0000151346" description="Ketol-acid reductoisomerase (NADP(+))">
    <location>
        <begin position="1"/>
        <end position="339"/>
    </location>
</feature>
<feature type="domain" description="KARI N-terminal Rossmann" evidence="2">
    <location>
        <begin position="1"/>
        <end position="182"/>
    </location>
</feature>
<feature type="domain" description="KARI C-terminal knotted" evidence="3">
    <location>
        <begin position="183"/>
        <end position="328"/>
    </location>
</feature>
<feature type="active site" evidence="1">
    <location>
        <position position="108"/>
    </location>
</feature>
<feature type="binding site" evidence="1">
    <location>
        <begin position="24"/>
        <end position="27"/>
    </location>
    <ligand>
        <name>NADP(+)</name>
        <dbReference type="ChEBI" id="CHEBI:58349"/>
    </ligand>
</feature>
<feature type="binding site" evidence="1">
    <location>
        <position position="48"/>
    </location>
    <ligand>
        <name>NADP(+)</name>
        <dbReference type="ChEBI" id="CHEBI:58349"/>
    </ligand>
</feature>
<feature type="binding site" evidence="1">
    <location>
        <position position="51"/>
    </location>
    <ligand>
        <name>NADP(+)</name>
        <dbReference type="ChEBI" id="CHEBI:58349"/>
    </ligand>
</feature>
<feature type="binding site" evidence="1">
    <location>
        <position position="53"/>
    </location>
    <ligand>
        <name>NADP(+)</name>
        <dbReference type="ChEBI" id="CHEBI:58349"/>
    </ligand>
</feature>
<feature type="binding site" evidence="1">
    <location>
        <begin position="83"/>
        <end position="86"/>
    </location>
    <ligand>
        <name>NADP(+)</name>
        <dbReference type="ChEBI" id="CHEBI:58349"/>
    </ligand>
</feature>
<feature type="binding site" evidence="1">
    <location>
        <position position="134"/>
    </location>
    <ligand>
        <name>NADP(+)</name>
        <dbReference type="ChEBI" id="CHEBI:58349"/>
    </ligand>
</feature>
<feature type="binding site" evidence="1">
    <location>
        <position position="191"/>
    </location>
    <ligand>
        <name>Mg(2+)</name>
        <dbReference type="ChEBI" id="CHEBI:18420"/>
        <label>1</label>
    </ligand>
</feature>
<feature type="binding site" evidence="1">
    <location>
        <position position="191"/>
    </location>
    <ligand>
        <name>Mg(2+)</name>
        <dbReference type="ChEBI" id="CHEBI:18420"/>
        <label>2</label>
    </ligand>
</feature>
<feature type="binding site" evidence="1">
    <location>
        <position position="195"/>
    </location>
    <ligand>
        <name>Mg(2+)</name>
        <dbReference type="ChEBI" id="CHEBI:18420"/>
        <label>1</label>
    </ligand>
</feature>
<feature type="binding site" evidence="1">
    <location>
        <position position="227"/>
    </location>
    <ligand>
        <name>Mg(2+)</name>
        <dbReference type="ChEBI" id="CHEBI:18420"/>
        <label>2</label>
    </ligand>
</feature>
<feature type="binding site" evidence="1">
    <location>
        <position position="231"/>
    </location>
    <ligand>
        <name>Mg(2+)</name>
        <dbReference type="ChEBI" id="CHEBI:18420"/>
        <label>2</label>
    </ligand>
</feature>
<feature type="binding site" evidence="1">
    <location>
        <position position="252"/>
    </location>
    <ligand>
        <name>substrate</name>
    </ligand>
</feature>
<name>ILVC_RHILO</name>
<keyword id="KW-0028">Amino-acid biosynthesis</keyword>
<keyword id="KW-0100">Branched-chain amino acid biosynthesis</keyword>
<keyword id="KW-0460">Magnesium</keyword>
<keyword id="KW-0479">Metal-binding</keyword>
<keyword id="KW-0521">NADP</keyword>
<keyword id="KW-0560">Oxidoreductase</keyword>
<comment type="function">
    <text evidence="1">Involved in the biosynthesis of branched-chain amino acids (BCAA). Catalyzes an alkyl-migration followed by a ketol-acid reduction of (S)-2-acetolactate (S2AL) to yield (R)-2,3-dihydroxy-isovalerate. In the isomerase reaction, S2AL is rearranged via a Mg-dependent methyl migration to produce 3-hydroxy-3-methyl-2-ketobutyrate (HMKB). In the reductase reaction, this 2-ketoacid undergoes a metal-dependent reduction by NADPH to yield (R)-2,3-dihydroxy-isovalerate.</text>
</comment>
<comment type="catalytic activity">
    <reaction evidence="1">
        <text>(2R)-2,3-dihydroxy-3-methylbutanoate + NADP(+) = (2S)-2-acetolactate + NADPH + H(+)</text>
        <dbReference type="Rhea" id="RHEA:22068"/>
        <dbReference type="ChEBI" id="CHEBI:15378"/>
        <dbReference type="ChEBI" id="CHEBI:49072"/>
        <dbReference type="ChEBI" id="CHEBI:57783"/>
        <dbReference type="ChEBI" id="CHEBI:58349"/>
        <dbReference type="ChEBI" id="CHEBI:58476"/>
        <dbReference type="EC" id="1.1.1.86"/>
    </reaction>
</comment>
<comment type="catalytic activity">
    <reaction evidence="1">
        <text>(2R,3R)-2,3-dihydroxy-3-methylpentanoate + NADP(+) = (S)-2-ethyl-2-hydroxy-3-oxobutanoate + NADPH + H(+)</text>
        <dbReference type="Rhea" id="RHEA:13493"/>
        <dbReference type="ChEBI" id="CHEBI:15378"/>
        <dbReference type="ChEBI" id="CHEBI:49256"/>
        <dbReference type="ChEBI" id="CHEBI:49258"/>
        <dbReference type="ChEBI" id="CHEBI:57783"/>
        <dbReference type="ChEBI" id="CHEBI:58349"/>
        <dbReference type="EC" id="1.1.1.86"/>
    </reaction>
</comment>
<comment type="cofactor">
    <cofactor evidence="1">
        <name>Mg(2+)</name>
        <dbReference type="ChEBI" id="CHEBI:18420"/>
    </cofactor>
    <text evidence="1">Binds 2 magnesium ions per subunit.</text>
</comment>
<comment type="pathway">
    <text evidence="1">Amino-acid biosynthesis; L-isoleucine biosynthesis; L-isoleucine from 2-oxobutanoate: step 2/4.</text>
</comment>
<comment type="pathway">
    <text evidence="1">Amino-acid biosynthesis; L-valine biosynthesis; L-valine from pyruvate: step 2/4.</text>
</comment>
<comment type="similarity">
    <text evidence="1">Belongs to the ketol-acid reductoisomerase family.</text>
</comment>
<dbReference type="EC" id="1.1.1.86" evidence="1"/>
<dbReference type="EMBL" id="BA000012">
    <property type="protein sequence ID" value="BAB48787.1"/>
    <property type="molecule type" value="Genomic_DNA"/>
</dbReference>
<dbReference type="RefSeq" id="WP_010910140.1">
    <property type="nucleotide sequence ID" value="NC_002678.2"/>
</dbReference>
<dbReference type="SMR" id="Q98KM7"/>
<dbReference type="GeneID" id="66683453"/>
<dbReference type="KEGG" id="mlo:mll1405"/>
<dbReference type="eggNOG" id="COG0059">
    <property type="taxonomic scope" value="Bacteria"/>
</dbReference>
<dbReference type="HOGENOM" id="CLU_033821_0_1_5"/>
<dbReference type="UniPathway" id="UPA00047">
    <property type="reaction ID" value="UER00056"/>
</dbReference>
<dbReference type="UniPathway" id="UPA00049">
    <property type="reaction ID" value="UER00060"/>
</dbReference>
<dbReference type="Proteomes" id="UP000000552">
    <property type="component" value="Chromosome"/>
</dbReference>
<dbReference type="GO" id="GO:0005829">
    <property type="term" value="C:cytosol"/>
    <property type="evidence" value="ECO:0007669"/>
    <property type="project" value="TreeGrafter"/>
</dbReference>
<dbReference type="GO" id="GO:0004455">
    <property type="term" value="F:ketol-acid reductoisomerase activity"/>
    <property type="evidence" value="ECO:0007669"/>
    <property type="project" value="UniProtKB-UniRule"/>
</dbReference>
<dbReference type="GO" id="GO:0000287">
    <property type="term" value="F:magnesium ion binding"/>
    <property type="evidence" value="ECO:0007669"/>
    <property type="project" value="UniProtKB-UniRule"/>
</dbReference>
<dbReference type="GO" id="GO:0050661">
    <property type="term" value="F:NADP binding"/>
    <property type="evidence" value="ECO:0007669"/>
    <property type="project" value="InterPro"/>
</dbReference>
<dbReference type="GO" id="GO:0009097">
    <property type="term" value="P:isoleucine biosynthetic process"/>
    <property type="evidence" value="ECO:0007669"/>
    <property type="project" value="UniProtKB-UniRule"/>
</dbReference>
<dbReference type="GO" id="GO:0009099">
    <property type="term" value="P:L-valine biosynthetic process"/>
    <property type="evidence" value="ECO:0007669"/>
    <property type="project" value="UniProtKB-UniRule"/>
</dbReference>
<dbReference type="FunFam" id="3.40.50.720:FF:000023">
    <property type="entry name" value="Ketol-acid reductoisomerase (NADP(+))"/>
    <property type="match status" value="1"/>
</dbReference>
<dbReference type="Gene3D" id="6.10.240.10">
    <property type="match status" value="1"/>
</dbReference>
<dbReference type="Gene3D" id="3.40.50.720">
    <property type="entry name" value="NAD(P)-binding Rossmann-like Domain"/>
    <property type="match status" value="1"/>
</dbReference>
<dbReference type="HAMAP" id="MF_00435">
    <property type="entry name" value="IlvC"/>
    <property type="match status" value="1"/>
</dbReference>
<dbReference type="InterPro" id="IPR008927">
    <property type="entry name" value="6-PGluconate_DH-like_C_sf"/>
</dbReference>
<dbReference type="InterPro" id="IPR013023">
    <property type="entry name" value="KARI"/>
</dbReference>
<dbReference type="InterPro" id="IPR000506">
    <property type="entry name" value="KARI_C"/>
</dbReference>
<dbReference type="InterPro" id="IPR013116">
    <property type="entry name" value="KARI_N"/>
</dbReference>
<dbReference type="InterPro" id="IPR014359">
    <property type="entry name" value="KARI_prok"/>
</dbReference>
<dbReference type="InterPro" id="IPR036291">
    <property type="entry name" value="NAD(P)-bd_dom_sf"/>
</dbReference>
<dbReference type="NCBIfam" id="TIGR00465">
    <property type="entry name" value="ilvC"/>
    <property type="match status" value="1"/>
</dbReference>
<dbReference type="NCBIfam" id="NF004017">
    <property type="entry name" value="PRK05479.1"/>
    <property type="match status" value="1"/>
</dbReference>
<dbReference type="NCBIfam" id="NF009940">
    <property type="entry name" value="PRK13403.1"/>
    <property type="match status" value="1"/>
</dbReference>
<dbReference type="PANTHER" id="PTHR21371">
    <property type="entry name" value="KETOL-ACID REDUCTOISOMERASE, MITOCHONDRIAL"/>
    <property type="match status" value="1"/>
</dbReference>
<dbReference type="PANTHER" id="PTHR21371:SF1">
    <property type="entry name" value="KETOL-ACID REDUCTOISOMERASE, MITOCHONDRIAL"/>
    <property type="match status" value="1"/>
</dbReference>
<dbReference type="Pfam" id="PF01450">
    <property type="entry name" value="KARI_C"/>
    <property type="match status" value="1"/>
</dbReference>
<dbReference type="Pfam" id="PF07991">
    <property type="entry name" value="KARI_N"/>
    <property type="match status" value="1"/>
</dbReference>
<dbReference type="PIRSF" id="PIRSF000116">
    <property type="entry name" value="IlvC_gammaproteo"/>
    <property type="match status" value="1"/>
</dbReference>
<dbReference type="SUPFAM" id="SSF48179">
    <property type="entry name" value="6-phosphogluconate dehydrogenase C-terminal domain-like"/>
    <property type="match status" value="1"/>
</dbReference>
<dbReference type="SUPFAM" id="SSF51735">
    <property type="entry name" value="NAD(P)-binding Rossmann-fold domains"/>
    <property type="match status" value="1"/>
</dbReference>
<dbReference type="PROSITE" id="PS51851">
    <property type="entry name" value="KARI_C"/>
    <property type="match status" value="1"/>
</dbReference>
<dbReference type="PROSITE" id="PS51850">
    <property type="entry name" value="KARI_N"/>
    <property type="match status" value="1"/>
</dbReference>
<sequence>MRVYYDRDADLNLIKGKKVAIIGYGSQGRAHALNLKDSGAKEIAIGLKAGSATAKKVEADGLKVMSVADAAKWADLMMMATPDELQADIYKNEIAPNIRDGAAIAFAHGLNVHFGLIEPKSTVDVVMIAPKGPGHTVRGEYQKGGGVPCLVAVNQDASGNALDLALSYACGVGGGRSGIIETNFREECETDLFGEQVVLCGGLVELIRAGFETLVEAGYAPEMAYFECLHEVKLIVDLIYEGGIANMNYSISNTAEWGEYVSGPRIITAETKAEMKRVLKDIQTGKFTSEWMQEYRAGLSRFKGIRRMNDSHQIEEVGAKLRAMMPWISKNKLVDKAKN</sequence>